<proteinExistence type="inferred from homology"/>
<protein>
    <recommendedName>
        <fullName>Threonylcarbamoyladenosine tRNA methylthiotransferase</fullName>
        <ecNumber evidence="1">2.8.4.5</ecNumber>
    </recommendedName>
    <alternativeName>
        <fullName>CDKAL1-like protein</fullName>
    </alternativeName>
    <alternativeName>
        <fullName>tRNA-t(6)A37 methylthiotransferase</fullName>
    </alternativeName>
</protein>
<evidence type="ECO:0000250" key="1">
    <source>
        <dbReference type="UniProtKB" id="Q91WE6"/>
    </source>
</evidence>
<evidence type="ECO:0000255" key="2"/>
<evidence type="ECO:0000255" key="3">
    <source>
        <dbReference type="PROSITE-ProRule" id="PRU00208"/>
    </source>
</evidence>
<evidence type="ECO:0000255" key="4">
    <source>
        <dbReference type="PROSITE-ProRule" id="PRU00780"/>
    </source>
</evidence>
<evidence type="ECO:0000255" key="5">
    <source>
        <dbReference type="PROSITE-ProRule" id="PRU01266"/>
    </source>
</evidence>
<evidence type="ECO:0000256" key="6">
    <source>
        <dbReference type="SAM" id="MobiDB-lite"/>
    </source>
</evidence>
<evidence type="ECO:0000305" key="7"/>
<gene>
    <name type="ORF">GA19679</name>
</gene>
<keyword id="KW-0004">4Fe-4S</keyword>
<keyword id="KW-0408">Iron</keyword>
<keyword id="KW-0411">Iron-sulfur</keyword>
<keyword id="KW-0472">Membrane</keyword>
<keyword id="KW-0479">Metal-binding</keyword>
<keyword id="KW-1185">Reference proteome</keyword>
<keyword id="KW-0949">S-adenosyl-L-methionine</keyword>
<keyword id="KW-0808">Transferase</keyword>
<keyword id="KW-0812">Transmembrane</keyword>
<keyword id="KW-1133">Transmembrane helix</keyword>
<keyword id="KW-0819">tRNA processing</keyword>
<name>CDKAL_DROPS</name>
<reference key="1">
    <citation type="journal article" date="2005" name="Genome Res.">
        <title>Comparative genome sequencing of Drosophila pseudoobscura: chromosomal, gene, and cis-element evolution.</title>
        <authorList>
            <person name="Richards S."/>
            <person name="Liu Y."/>
            <person name="Bettencourt B.R."/>
            <person name="Hradecky P."/>
            <person name="Letovsky S."/>
            <person name="Nielsen R."/>
            <person name="Thornton K."/>
            <person name="Hubisz M.J."/>
            <person name="Chen R."/>
            <person name="Meisel R.P."/>
            <person name="Couronne O."/>
            <person name="Hua S."/>
            <person name="Smith M.A."/>
            <person name="Zhang P."/>
            <person name="Liu J."/>
            <person name="Bussemaker H.J."/>
            <person name="van Batenburg M.F."/>
            <person name="Howells S.L."/>
            <person name="Scherer S.E."/>
            <person name="Sodergren E."/>
            <person name="Matthews B.B."/>
            <person name="Crosby M.A."/>
            <person name="Schroeder A.J."/>
            <person name="Ortiz-Barrientos D."/>
            <person name="Rives C.M."/>
            <person name="Metzker M.L."/>
            <person name="Muzny D.M."/>
            <person name="Scott G."/>
            <person name="Steffen D."/>
            <person name="Wheeler D.A."/>
            <person name="Worley K.C."/>
            <person name="Havlak P."/>
            <person name="Durbin K.J."/>
            <person name="Egan A."/>
            <person name="Gill R."/>
            <person name="Hume J."/>
            <person name="Morgan M.B."/>
            <person name="Miner G."/>
            <person name="Hamilton C."/>
            <person name="Huang Y."/>
            <person name="Waldron L."/>
            <person name="Verduzco D."/>
            <person name="Clerc-Blankenburg K.P."/>
            <person name="Dubchak I."/>
            <person name="Noor M.A.F."/>
            <person name="Anderson W."/>
            <person name="White K.P."/>
            <person name="Clark A.G."/>
            <person name="Schaeffer S.W."/>
            <person name="Gelbart W.M."/>
            <person name="Weinstock G.M."/>
            <person name="Gibbs R.A."/>
        </authorList>
    </citation>
    <scope>NUCLEOTIDE SEQUENCE [LARGE SCALE GENOMIC DNA]</scope>
    <source>
        <strain>MV2-25 / Tucson 14011-0121.94</strain>
    </source>
</reference>
<feature type="chain" id="PRO_0000298677" description="Threonylcarbamoyladenosine tRNA methylthiotransferase">
    <location>
        <begin position="1"/>
        <end position="553"/>
    </location>
</feature>
<feature type="transmembrane region" description="Helical" evidence="2">
    <location>
        <begin position="533"/>
        <end position="553"/>
    </location>
</feature>
<feature type="domain" description="MTTase N-terminal" evidence="4">
    <location>
        <begin position="72"/>
        <end position="179"/>
    </location>
</feature>
<feature type="domain" description="Radical SAM core" evidence="5">
    <location>
        <begin position="207"/>
        <end position="438"/>
    </location>
</feature>
<feature type="domain" description="TRAM" evidence="3">
    <location>
        <begin position="438"/>
        <end position="500"/>
    </location>
</feature>
<feature type="region of interest" description="Disordered" evidence="6">
    <location>
        <begin position="21"/>
        <end position="61"/>
    </location>
</feature>
<feature type="compositionally biased region" description="Basic and acidic residues" evidence="6">
    <location>
        <begin position="23"/>
        <end position="32"/>
    </location>
</feature>
<feature type="compositionally biased region" description="Basic and acidic residues" evidence="6">
    <location>
        <begin position="47"/>
        <end position="58"/>
    </location>
</feature>
<feature type="binding site" evidence="4">
    <location>
        <position position="81"/>
    </location>
    <ligand>
        <name>[4Fe-4S] cluster</name>
        <dbReference type="ChEBI" id="CHEBI:49883"/>
        <label>1</label>
    </ligand>
</feature>
<feature type="binding site" evidence="4">
    <location>
        <position position="116"/>
    </location>
    <ligand>
        <name>[4Fe-4S] cluster</name>
        <dbReference type="ChEBI" id="CHEBI:49883"/>
        <label>1</label>
    </ligand>
</feature>
<feature type="binding site" evidence="4">
    <location>
        <position position="145"/>
    </location>
    <ligand>
        <name>[4Fe-4S] cluster</name>
        <dbReference type="ChEBI" id="CHEBI:49883"/>
        <label>1</label>
    </ligand>
</feature>
<feature type="binding site" evidence="4">
    <location>
        <position position="221"/>
    </location>
    <ligand>
        <name>[4Fe-4S] cluster</name>
        <dbReference type="ChEBI" id="CHEBI:49883"/>
        <label>2</label>
        <note>4Fe-4S-S-AdoMet</note>
    </ligand>
</feature>
<feature type="binding site" evidence="4">
    <location>
        <position position="225"/>
    </location>
    <ligand>
        <name>[4Fe-4S] cluster</name>
        <dbReference type="ChEBI" id="CHEBI:49883"/>
        <label>2</label>
        <note>4Fe-4S-S-AdoMet</note>
    </ligand>
</feature>
<feature type="binding site" evidence="4">
    <location>
        <position position="228"/>
    </location>
    <ligand>
        <name>[4Fe-4S] cluster</name>
        <dbReference type="ChEBI" id="CHEBI:49883"/>
        <label>2</label>
        <note>4Fe-4S-S-AdoMet</note>
    </ligand>
</feature>
<comment type="function">
    <text evidence="1">Catalyzes the methylthiolation of N6-threonylcarbamoyladenosine (t(6)A), leading to the formation of 2-methylthio-N6-threonylcarbamoyladenosine (ms(2)t(6)A) at position 37 in tRNAs that read codons beginning with adenine.</text>
</comment>
<comment type="catalytic activity">
    <reaction evidence="1">
        <text>N(6)-L-threonylcarbamoyladenosine(37) in tRNA + (sulfur carrier)-SH + AH2 + 2 S-adenosyl-L-methionine = 2-methylsulfanyl-N(6)-L-threonylcarbamoyladenosine(37) in tRNA + (sulfur carrier)-H + 5'-deoxyadenosine + L-methionine + A + S-adenosyl-L-homocysteine + 2 H(+)</text>
        <dbReference type="Rhea" id="RHEA:37075"/>
        <dbReference type="Rhea" id="RHEA-COMP:10163"/>
        <dbReference type="Rhea" id="RHEA-COMP:11092"/>
        <dbReference type="Rhea" id="RHEA-COMP:14737"/>
        <dbReference type="Rhea" id="RHEA-COMP:14739"/>
        <dbReference type="ChEBI" id="CHEBI:13193"/>
        <dbReference type="ChEBI" id="CHEBI:15378"/>
        <dbReference type="ChEBI" id="CHEBI:17319"/>
        <dbReference type="ChEBI" id="CHEBI:17499"/>
        <dbReference type="ChEBI" id="CHEBI:29917"/>
        <dbReference type="ChEBI" id="CHEBI:57844"/>
        <dbReference type="ChEBI" id="CHEBI:57856"/>
        <dbReference type="ChEBI" id="CHEBI:59789"/>
        <dbReference type="ChEBI" id="CHEBI:64428"/>
        <dbReference type="ChEBI" id="CHEBI:74418"/>
        <dbReference type="ChEBI" id="CHEBI:74420"/>
        <dbReference type="EC" id="2.8.4.5"/>
    </reaction>
</comment>
<comment type="cofactor">
    <cofactor evidence="4">
        <name>[4Fe-4S] cluster</name>
        <dbReference type="ChEBI" id="CHEBI:49883"/>
    </cofactor>
    <text evidence="4">Binds 2 [4Fe-4S] clusters. One cluster is coordinated with 3 cysteines and an exchangeable S-adenosyl-L-methionine.</text>
</comment>
<comment type="subcellular location">
    <subcellularLocation>
        <location evidence="7">Membrane</location>
        <topology evidence="7">Single-pass membrane protein</topology>
    </subcellularLocation>
</comment>
<comment type="similarity">
    <text evidence="7">Belongs to the methylthiotransferase family. CDKAL1 subfamily.</text>
</comment>
<dbReference type="EC" id="2.8.4.5" evidence="1"/>
<dbReference type="EMBL" id="CM000071">
    <property type="protein sequence ID" value="EAL25137.1"/>
    <property type="molecule type" value="Genomic_DNA"/>
</dbReference>
<dbReference type="RefSeq" id="XP_001360562.1">
    <property type="nucleotide sequence ID" value="XM_001360525.3"/>
</dbReference>
<dbReference type="SMR" id="Q291H5"/>
<dbReference type="FunCoup" id="Q291H5">
    <property type="interactions" value="2158"/>
</dbReference>
<dbReference type="STRING" id="46245.Q291H5"/>
<dbReference type="EnsemblMetazoa" id="FBtr0278387">
    <property type="protein sequence ID" value="FBpp0276825"/>
    <property type="gene ID" value="FBgn0079675"/>
</dbReference>
<dbReference type="KEGG" id="dpo:4803921"/>
<dbReference type="eggNOG" id="KOG4355">
    <property type="taxonomic scope" value="Eukaryota"/>
</dbReference>
<dbReference type="HOGENOM" id="CLU_018697_4_1_1"/>
<dbReference type="InParanoid" id="Q291H5"/>
<dbReference type="OMA" id="HYAYPTG"/>
<dbReference type="PhylomeDB" id="Q291H5"/>
<dbReference type="Proteomes" id="UP000001819">
    <property type="component" value="Chromosome 3"/>
</dbReference>
<dbReference type="Bgee" id="FBgn0079675">
    <property type="expression patterns" value="Expressed in female reproductive system and 2 other cell types or tissues"/>
</dbReference>
<dbReference type="GO" id="GO:0005783">
    <property type="term" value="C:endoplasmic reticulum"/>
    <property type="evidence" value="ECO:0007669"/>
    <property type="project" value="TreeGrafter"/>
</dbReference>
<dbReference type="GO" id="GO:0016020">
    <property type="term" value="C:membrane"/>
    <property type="evidence" value="ECO:0007669"/>
    <property type="project" value="UniProtKB-SubCell"/>
</dbReference>
<dbReference type="GO" id="GO:0051539">
    <property type="term" value="F:4 iron, 4 sulfur cluster binding"/>
    <property type="evidence" value="ECO:0007669"/>
    <property type="project" value="UniProtKB-KW"/>
</dbReference>
<dbReference type="GO" id="GO:0046872">
    <property type="term" value="F:metal ion binding"/>
    <property type="evidence" value="ECO:0007669"/>
    <property type="project" value="UniProtKB-KW"/>
</dbReference>
<dbReference type="GO" id="GO:0035598">
    <property type="term" value="F:N6-threonylcarbomyladenosine methylthiotransferase activity"/>
    <property type="evidence" value="ECO:0007669"/>
    <property type="project" value="InterPro"/>
</dbReference>
<dbReference type="GO" id="GO:0061712">
    <property type="term" value="F:tRNA (N(6)-L-threonylcarbamoyladenosine(37)-C(2))-methylthiotransferase"/>
    <property type="evidence" value="ECO:0007669"/>
    <property type="project" value="UniProtKB-EC"/>
</dbReference>
<dbReference type="FunFam" id="3.40.50.12160:FF:000005">
    <property type="entry name" value="threonylcarbamoyladenosine tRNA methylthiotransferase isoform X1"/>
    <property type="match status" value="1"/>
</dbReference>
<dbReference type="FunFam" id="3.80.30.20:FF:000002">
    <property type="entry name" value="threonylcarbamoyladenosine tRNA methylthiotransferase isoform X2"/>
    <property type="match status" value="1"/>
</dbReference>
<dbReference type="Gene3D" id="3.40.50.12160">
    <property type="entry name" value="Methylthiotransferase, N-terminal domain"/>
    <property type="match status" value="1"/>
</dbReference>
<dbReference type="Gene3D" id="3.80.30.20">
    <property type="entry name" value="tm_1862 like domain"/>
    <property type="match status" value="1"/>
</dbReference>
<dbReference type="InterPro" id="IPR006638">
    <property type="entry name" value="Elp3/MiaA/NifB-like_rSAM"/>
</dbReference>
<dbReference type="InterPro" id="IPR005839">
    <property type="entry name" value="Methylthiotransferase"/>
</dbReference>
<dbReference type="InterPro" id="IPR020612">
    <property type="entry name" value="Methylthiotransferase_CS"/>
</dbReference>
<dbReference type="InterPro" id="IPR013848">
    <property type="entry name" value="Methylthiotransferase_N"/>
</dbReference>
<dbReference type="InterPro" id="IPR038135">
    <property type="entry name" value="Methylthiotransferase_N_sf"/>
</dbReference>
<dbReference type="InterPro" id="IPR006466">
    <property type="entry name" value="MiaB-like_arc_euk"/>
</dbReference>
<dbReference type="InterPro" id="IPR007197">
    <property type="entry name" value="rSAM"/>
</dbReference>
<dbReference type="InterPro" id="IPR023404">
    <property type="entry name" value="rSAM_horseshoe"/>
</dbReference>
<dbReference type="InterPro" id="IPR002792">
    <property type="entry name" value="TRAM_dom"/>
</dbReference>
<dbReference type="NCBIfam" id="TIGR01578">
    <property type="entry name" value="MiaB-like-B"/>
    <property type="match status" value="1"/>
</dbReference>
<dbReference type="NCBIfam" id="TIGR00089">
    <property type="entry name" value="MiaB/RimO family radical SAM methylthiotransferase"/>
    <property type="match status" value="1"/>
</dbReference>
<dbReference type="PANTHER" id="PTHR11918">
    <property type="entry name" value="RADICAL SAM PROTEINS"/>
    <property type="match status" value="1"/>
</dbReference>
<dbReference type="PANTHER" id="PTHR11918:SF45">
    <property type="entry name" value="THREONYLCARBAMOYLADENOSINE TRNA METHYLTHIOTRANSFERASE"/>
    <property type="match status" value="1"/>
</dbReference>
<dbReference type="Pfam" id="PF04055">
    <property type="entry name" value="Radical_SAM"/>
    <property type="match status" value="1"/>
</dbReference>
<dbReference type="Pfam" id="PF00919">
    <property type="entry name" value="UPF0004"/>
    <property type="match status" value="1"/>
</dbReference>
<dbReference type="SFLD" id="SFLDG01082">
    <property type="entry name" value="B12-binding_domain_containing"/>
    <property type="match status" value="1"/>
</dbReference>
<dbReference type="SFLD" id="SFLDS00029">
    <property type="entry name" value="Radical_SAM"/>
    <property type="match status" value="1"/>
</dbReference>
<dbReference type="SMART" id="SM00729">
    <property type="entry name" value="Elp3"/>
    <property type="match status" value="1"/>
</dbReference>
<dbReference type="SUPFAM" id="SSF102114">
    <property type="entry name" value="Radical SAM enzymes"/>
    <property type="match status" value="1"/>
</dbReference>
<dbReference type="PROSITE" id="PS51449">
    <property type="entry name" value="MTTASE_N"/>
    <property type="match status" value="1"/>
</dbReference>
<dbReference type="PROSITE" id="PS01278">
    <property type="entry name" value="MTTASE_RADICAL"/>
    <property type="match status" value="1"/>
</dbReference>
<dbReference type="PROSITE" id="PS51918">
    <property type="entry name" value="RADICAL_SAM"/>
    <property type="match status" value="1"/>
</dbReference>
<dbReference type="PROSITE" id="PS50926">
    <property type="entry name" value="TRAM"/>
    <property type="match status" value="1"/>
</dbReference>
<sequence>MQQLEQDFPGNDIDDIEDLISAEDVKPQERYQNKKSVTVRAKKRVQIKPETDAEEKPTPRPTIYESVIPGTQKVFVKTWGCAHNNSDSEYMAGQLAAYGYKLSGKDEADLWLLNSCTVKNPSEDTFRNEIESGMSNGKHIVVAGCVPQGAPKSDYLRGLSVIGVQQIDRVVEVVEETLKGHSVRLLQNKKVHGRRVAGAPLSLPKVRKNPLIEIISINTGCLNQCTYCKTKHARGDLASYPPEEIVDRARQSFAEGCCEIWLTSEDTGAYGRDIGSSLPELLWKLVEVIPEHCMLRVGMTNPPYILEHLEEVAKVLQHPRVYAFLHVPVQSGSDSVLGEMKREYCRKDFEHVVDFLRERVPGVTIATDIICGFPTETEEDFEETMTLCGRYRFPSLFINQFFPRPGTPAAKMERIPANLVKKRTKRLTDLFYSYEPYAQRVGEMYTVLVTEISHDKLHYVGHNKSYEQVLLPMRDNLLGTRVHVRITSVSKFSMVGEILDDERDWTRCAKKQEAPMELTITGRNRDKLIQRYVGIALVVGSLAFLLQLLIRFL</sequence>
<organism>
    <name type="scientific">Drosophila pseudoobscura pseudoobscura</name>
    <name type="common">Fruit fly</name>
    <dbReference type="NCBI Taxonomy" id="46245"/>
    <lineage>
        <taxon>Eukaryota</taxon>
        <taxon>Metazoa</taxon>
        <taxon>Ecdysozoa</taxon>
        <taxon>Arthropoda</taxon>
        <taxon>Hexapoda</taxon>
        <taxon>Insecta</taxon>
        <taxon>Pterygota</taxon>
        <taxon>Neoptera</taxon>
        <taxon>Endopterygota</taxon>
        <taxon>Diptera</taxon>
        <taxon>Brachycera</taxon>
        <taxon>Muscomorpha</taxon>
        <taxon>Ephydroidea</taxon>
        <taxon>Drosophilidae</taxon>
        <taxon>Drosophila</taxon>
        <taxon>Sophophora</taxon>
    </lineage>
</organism>
<accession>Q291H5</accession>